<reference evidence="5 6" key="1">
    <citation type="journal article" date="2003" name="Traffic">
        <title>Compromise of clathrin function and membrane association by clathrin light chain deletion.</title>
        <authorList>
            <person name="Wang J."/>
            <person name="Virta V.C."/>
            <person name="Riddelle-Spencer K."/>
            <person name="O'Halloran T.J."/>
        </authorList>
    </citation>
    <scope>NUCLEOTIDE SEQUENCE [MRNA]</scope>
    <scope>PROTEIN SEQUENCE OF 118-127; 145-153 AND 189-192</scope>
    <scope>FUNCTION</scope>
    <scope>SUBUNIT</scope>
    <scope>DISRUPTION PHENOTYPE</scope>
</reference>
<reference key="2">
    <citation type="journal article" date="2002" name="Nature">
        <title>Sequence and analysis of chromosome 2 of Dictyostelium discoideum.</title>
        <authorList>
            <person name="Gloeckner G."/>
            <person name="Eichinger L."/>
            <person name="Szafranski K."/>
            <person name="Pachebat J.A."/>
            <person name="Bankier A.T."/>
            <person name="Dear P.H."/>
            <person name="Lehmann R."/>
            <person name="Baumgart C."/>
            <person name="Parra G."/>
            <person name="Abril J.F."/>
            <person name="Guigo R."/>
            <person name="Kumpf K."/>
            <person name="Tunggal B."/>
            <person name="Cox E.C."/>
            <person name="Quail M.A."/>
            <person name="Platzer M."/>
            <person name="Rosenthal A."/>
            <person name="Noegel A.A."/>
        </authorList>
    </citation>
    <scope>NUCLEOTIDE SEQUENCE [LARGE SCALE GENOMIC DNA]</scope>
    <source>
        <strain>AX4</strain>
    </source>
</reference>
<reference evidence="7" key="3">
    <citation type="journal article" date="2005" name="Nature">
        <title>The genome of the social amoeba Dictyostelium discoideum.</title>
        <authorList>
            <person name="Eichinger L."/>
            <person name="Pachebat J.A."/>
            <person name="Gloeckner G."/>
            <person name="Rajandream M.A."/>
            <person name="Sucgang R."/>
            <person name="Berriman M."/>
            <person name="Song J."/>
            <person name="Olsen R."/>
            <person name="Szafranski K."/>
            <person name="Xu Q."/>
            <person name="Tunggal B."/>
            <person name="Kummerfeld S."/>
            <person name="Madera M."/>
            <person name="Konfortov B.A."/>
            <person name="Rivero F."/>
            <person name="Bankier A.T."/>
            <person name="Lehmann R."/>
            <person name="Hamlin N."/>
            <person name="Davies R."/>
            <person name="Gaudet P."/>
            <person name="Fey P."/>
            <person name="Pilcher K."/>
            <person name="Chen G."/>
            <person name="Saunders D."/>
            <person name="Sodergren E.J."/>
            <person name="Davis P."/>
            <person name="Kerhornou A."/>
            <person name="Nie X."/>
            <person name="Hall N."/>
            <person name="Anjard C."/>
            <person name="Hemphill L."/>
            <person name="Bason N."/>
            <person name="Farbrother P."/>
            <person name="Desany B."/>
            <person name="Just E."/>
            <person name="Morio T."/>
            <person name="Rost R."/>
            <person name="Churcher C.M."/>
            <person name="Cooper J."/>
            <person name="Haydock S."/>
            <person name="van Driessche N."/>
            <person name="Cronin A."/>
            <person name="Goodhead I."/>
            <person name="Muzny D.M."/>
            <person name="Mourier T."/>
            <person name="Pain A."/>
            <person name="Lu M."/>
            <person name="Harper D."/>
            <person name="Lindsay R."/>
            <person name="Hauser H."/>
            <person name="James K.D."/>
            <person name="Quiles M."/>
            <person name="Madan Babu M."/>
            <person name="Saito T."/>
            <person name="Buchrieser C."/>
            <person name="Wardroper A."/>
            <person name="Felder M."/>
            <person name="Thangavelu M."/>
            <person name="Johnson D."/>
            <person name="Knights A."/>
            <person name="Loulseged H."/>
            <person name="Mungall K.L."/>
            <person name="Oliver K."/>
            <person name="Price C."/>
            <person name="Quail M.A."/>
            <person name="Urushihara H."/>
            <person name="Hernandez J."/>
            <person name="Rabbinowitsch E."/>
            <person name="Steffen D."/>
            <person name="Sanders M."/>
            <person name="Ma J."/>
            <person name="Kohara Y."/>
            <person name="Sharp S."/>
            <person name="Simmonds M.N."/>
            <person name="Spiegler S."/>
            <person name="Tivey A."/>
            <person name="Sugano S."/>
            <person name="White B."/>
            <person name="Walker D."/>
            <person name="Woodward J.R."/>
            <person name="Winckler T."/>
            <person name="Tanaka Y."/>
            <person name="Shaulsky G."/>
            <person name="Schleicher M."/>
            <person name="Weinstock G.M."/>
            <person name="Rosenthal A."/>
            <person name="Cox E.C."/>
            <person name="Chisholm R.L."/>
            <person name="Gibbs R.A."/>
            <person name="Loomis W.F."/>
            <person name="Platzer M."/>
            <person name="Kay R.R."/>
            <person name="Williams J.G."/>
            <person name="Dear P.H."/>
            <person name="Noegel A.A."/>
            <person name="Barrell B.G."/>
            <person name="Kuspa A."/>
        </authorList>
    </citation>
    <scope>NUCLEOTIDE SEQUENCE [LARGE SCALE GENOMIC DNA]</scope>
    <source>
        <strain>AX4</strain>
    </source>
</reference>
<reference evidence="5" key="4">
    <citation type="journal article" date="1997" name="Protein Expr. Purif.">
        <title>Purification of clathrin heavy and light chain from Dictyostelium discoideum.</title>
        <authorList>
            <person name="Riddelle-Spencer K.S."/>
            <person name="O'Halloran T.J."/>
        </authorList>
    </citation>
    <scope>IDENTIFICATION</scope>
    <scope>INTERACTION WITH CHCA</scope>
</reference>
<reference evidence="5" key="5">
    <citation type="journal article" date="2006" name="Traffic">
        <title>Clathrin light chain: importance of the conserved carboxy terminal domain to function in living cells.</title>
        <authorList>
            <person name="Wang J."/>
            <person name="Wang Y."/>
            <person name="O'Halloran T.J."/>
        </authorList>
    </citation>
    <scope>SUBCELLULAR LOCATION</scope>
    <scope>INTERACTION WITH CHCA</scope>
</reference>
<comment type="function">
    <text evidence="2 5">Clathrin is the major protein of the polyhedral coat of coated pits and vesicles.</text>
</comment>
<comment type="subunit">
    <text evidence="2 4 5">Clathrin coats are formed from molecules containing 3 heavy chains and 3 light chains.</text>
</comment>
<comment type="subcellular location">
    <subcellularLocation>
        <location evidence="3 5">Cytoplasmic vesicle membrane</location>
        <topology evidence="3">Peripheral membrane protein</topology>
        <orientation evidence="3">Cytoplasmic side</orientation>
    </subcellularLocation>
    <subcellularLocation>
        <location evidence="3 5">Membrane</location>
        <location evidence="3 5">Coated pit</location>
        <topology evidence="3">Peripheral membrane protein</topology>
        <orientation evidence="3">Cytoplasmic side</orientation>
    </subcellularLocation>
    <text evidence="3 5">Cytoplasmic face of coated pits and vesicles. Localized to punctae scattered within the cytoplasm, along the plasma membrane and concentrated in the perinuclear region.</text>
</comment>
<comment type="disruption phenotype">
    <text evidence="2">Cells fail to undergo cytokinesis in suspension culture and show osmoregulation defects. Late development is impaired in mutants lacking clc which produce misshapen projections rather than a fruiting body. Mutants lacking clc showed a reduction in the ability of clathrin to assemble onto membrane, though assembly of clathrin heavy chain triskelions was unaffected.</text>
</comment>
<comment type="similarity">
    <text evidence="5">Belongs to the clathrin light chain family.</text>
</comment>
<organism>
    <name type="scientific">Dictyostelium discoideum</name>
    <name type="common">Social amoeba</name>
    <dbReference type="NCBI Taxonomy" id="44689"/>
    <lineage>
        <taxon>Eukaryota</taxon>
        <taxon>Amoebozoa</taxon>
        <taxon>Evosea</taxon>
        <taxon>Eumycetozoa</taxon>
        <taxon>Dictyostelia</taxon>
        <taxon>Dictyosteliales</taxon>
        <taxon>Dictyosteliaceae</taxon>
        <taxon>Dictyostelium</taxon>
    </lineage>
</organism>
<name>CLC_DICDI</name>
<dbReference type="EMBL" id="AY394008">
    <property type="protein sequence ID" value="AAQ95635.1"/>
    <property type="molecule type" value="mRNA"/>
</dbReference>
<dbReference type="EMBL" id="AAFI02000020">
    <property type="protein sequence ID" value="EAL68664.1"/>
    <property type="molecule type" value="Genomic_DNA"/>
</dbReference>
<dbReference type="RefSeq" id="XP_642650.1">
    <property type="nucleotide sequence ID" value="XM_637558.1"/>
</dbReference>
<dbReference type="SMR" id="Q8MN58"/>
<dbReference type="FunCoup" id="Q8MN58">
    <property type="interactions" value="60"/>
</dbReference>
<dbReference type="STRING" id="44689.Q8MN58"/>
<dbReference type="PaxDb" id="44689-DDB0191305"/>
<dbReference type="EnsemblProtists" id="EAL68664">
    <property type="protein sequence ID" value="EAL68664"/>
    <property type="gene ID" value="DDB_G0277403"/>
</dbReference>
<dbReference type="GeneID" id="8621066"/>
<dbReference type="KEGG" id="ddi:DDB_G0277403"/>
<dbReference type="dictyBase" id="DDB_G0277403">
    <property type="gene designation" value="clc"/>
</dbReference>
<dbReference type="VEuPathDB" id="AmoebaDB:DDB_G0277403"/>
<dbReference type="eggNOG" id="KOG4031">
    <property type="taxonomic scope" value="Eukaryota"/>
</dbReference>
<dbReference type="HOGENOM" id="CLU_1404819_0_0_1"/>
<dbReference type="InParanoid" id="Q8MN58"/>
<dbReference type="OMA" id="NKDTSRM"/>
<dbReference type="Reactome" id="R-DDI-432720">
    <property type="pathway name" value="Lysosome Vesicle Biogenesis"/>
</dbReference>
<dbReference type="Reactome" id="R-DDI-437239">
    <property type="pathway name" value="Recycling pathway of L1"/>
</dbReference>
<dbReference type="Reactome" id="R-DDI-8856828">
    <property type="pathway name" value="Clathrin-mediated endocytosis"/>
</dbReference>
<dbReference type="Reactome" id="R-DDI-8866427">
    <property type="pathway name" value="VLDLR internalisation and degradation"/>
</dbReference>
<dbReference type="Reactome" id="R-DDI-8964038">
    <property type="pathway name" value="LDL clearance"/>
</dbReference>
<dbReference type="PRO" id="PR:Q8MN58"/>
<dbReference type="Proteomes" id="UP000002195">
    <property type="component" value="Chromosome 2"/>
</dbReference>
<dbReference type="GO" id="GO:0030132">
    <property type="term" value="C:clathrin coat of coated pit"/>
    <property type="evidence" value="ECO:0007669"/>
    <property type="project" value="InterPro"/>
</dbReference>
<dbReference type="GO" id="GO:0030130">
    <property type="term" value="C:clathrin coat of trans-Golgi network vesicle"/>
    <property type="evidence" value="ECO:0007669"/>
    <property type="project" value="InterPro"/>
</dbReference>
<dbReference type="GO" id="GO:0030125">
    <property type="term" value="C:clathrin vesicle coat"/>
    <property type="evidence" value="ECO:0000314"/>
    <property type="project" value="dictyBase"/>
</dbReference>
<dbReference type="GO" id="GO:0005737">
    <property type="term" value="C:cytoplasm"/>
    <property type="evidence" value="ECO:0000314"/>
    <property type="project" value="dictyBase"/>
</dbReference>
<dbReference type="GO" id="GO:0005886">
    <property type="term" value="C:plasma membrane"/>
    <property type="evidence" value="ECO:0000318"/>
    <property type="project" value="GO_Central"/>
</dbReference>
<dbReference type="GO" id="GO:0032050">
    <property type="term" value="F:clathrin heavy chain binding"/>
    <property type="evidence" value="ECO:0000318"/>
    <property type="project" value="GO_Central"/>
</dbReference>
<dbReference type="GO" id="GO:0005198">
    <property type="term" value="F:structural molecule activity"/>
    <property type="evidence" value="ECO:0007669"/>
    <property type="project" value="InterPro"/>
</dbReference>
<dbReference type="GO" id="GO:0048268">
    <property type="term" value="P:clathrin coat assembly"/>
    <property type="evidence" value="ECO:0000315"/>
    <property type="project" value="dictyBase"/>
</dbReference>
<dbReference type="GO" id="GO:0072583">
    <property type="term" value="P:clathrin-dependent endocytosis"/>
    <property type="evidence" value="ECO:0000318"/>
    <property type="project" value="GO_Central"/>
</dbReference>
<dbReference type="GO" id="GO:0031154">
    <property type="term" value="P:culmination involved in sorocarp development"/>
    <property type="evidence" value="ECO:0000315"/>
    <property type="project" value="dictyBase"/>
</dbReference>
<dbReference type="GO" id="GO:0006886">
    <property type="term" value="P:intracellular protein transport"/>
    <property type="evidence" value="ECO:0007669"/>
    <property type="project" value="InterPro"/>
</dbReference>
<dbReference type="GO" id="GO:0009992">
    <property type="term" value="P:intracellular water homeostasis"/>
    <property type="evidence" value="ECO:0000315"/>
    <property type="project" value="dictyBase"/>
</dbReference>
<dbReference type="GO" id="GO:0000281">
    <property type="term" value="P:mitotic cytokinesis"/>
    <property type="evidence" value="ECO:0000315"/>
    <property type="project" value="dictyBase"/>
</dbReference>
<dbReference type="GO" id="GO:0006898">
    <property type="term" value="P:receptor-mediated endocytosis"/>
    <property type="evidence" value="ECO:0000250"/>
    <property type="project" value="dictyBase"/>
</dbReference>
<dbReference type="InterPro" id="IPR000996">
    <property type="entry name" value="Clathrin_L-chain"/>
</dbReference>
<dbReference type="PANTHER" id="PTHR10639">
    <property type="entry name" value="CLATHRIN LIGHT CHAIN"/>
    <property type="match status" value="1"/>
</dbReference>
<dbReference type="PANTHER" id="PTHR10639:SF7">
    <property type="entry name" value="CLATHRIN LIGHT CHAIN"/>
    <property type="match status" value="1"/>
</dbReference>
<dbReference type="Pfam" id="PF01086">
    <property type="entry name" value="Clathrin_lg_ch"/>
    <property type="match status" value="1"/>
</dbReference>
<dbReference type="PROSITE" id="PS00581">
    <property type="entry name" value="CLATHRIN_LIGHT_CHN_2"/>
    <property type="match status" value="1"/>
</dbReference>
<sequence length="194" mass="22137">MSDPFGEENVEITEEFVEGDINENDLIDGNVEYVDGNGISFETTTFDNSNNNNNNNNHNNNSYNSGFDGDLSSVDGDMKPKETAPAMREYLEKHEKEMQEKKKKSEEKRQKKIAEAKQSLDNFYSEREAKKKTALKNNRDHNKSLETDSTSGNTTHTWESVVSMIDLQAKPNPANKDTSRMREILIRLKNQPIV</sequence>
<protein>
    <recommendedName>
        <fullName>Clathrin light chain</fullName>
    </recommendedName>
</protein>
<gene>
    <name type="primary">clc</name>
    <name evidence="6" type="synonym">clcA</name>
    <name type="ORF">DDB_G0277403</name>
</gene>
<proteinExistence type="evidence at protein level"/>
<accession>Q8MN58</accession>
<accession>Q54ZJ2</accession>
<keyword id="KW-0168">Coated pit</keyword>
<keyword id="KW-0968">Cytoplasmic vesicle</keyword>
<keyword id="KW-0903">Direct protein sequencing</keyword>
<keyword id="KW-0472">Membrane</keyword>
<keyword id="KW-1185">Reference proteome</keyword>
<evidence type="ECO:0000256" key="1">
    <source>
        <dbReference type="SAM" id="MobiDB-lite"/>
    </source>
</evidence>
<evidence type="ECO:0000269" key="2">
    <source>
    </source>
</evidence>
<evidence type="ECO:0000269" key="3">
    <source>
    </source>
</evidence>
<evidence type="ECO:0000269" key="4">
    <source>
    </source>
</evidence>
<evidence type="ECO:0000305" key="5"/>
<evidence type="ECO:0000312" key="6">
    <source>
        <dbReference type="EMBL" id="AAQ95635.1"/>
    </source>
</evidence>
<evidence type="ECO:0000312" key="7">
    <source>
        <dbReference type="EMBL" id="EAL68664.1"/>
    </source>
</evidence>
<feature type="chain" id="PRO_0000315878" description="Clathrin light chain">
    <location>
        <begin position="1"/>
        <end position="194"/>
    </location>
</feature>
<feature type="region of interest" description="Disordered" evidence="1">
    <location>
        <begin position="44"/>
        <end position="156"/>
    </location>
</feature>
<feature type="region of interest" description="Required for binding clathrin heavy chain, localization to punctae, and for cytokinesis and fruiting body development" evidence="3">
    <location>
        <begin position="124"/>
        <end position="194"/>
    </location>
</feature>
<feature type="compositionally biased region" description="Low complexity" evidence="1">
    <location>
        <begin position="48"/>
        <end position="65"/>
    </location>
</feature>
<feature type="compositionally biased region" description="Basic and acidic residues" evidence="1">
    <location>
        <begin position="89"/>
        <end position="115"/>
    </location>
</feature>
<feature type="compositionally biased region" description="Basic and acidic residues" evidence="1">
    <location>
        <begin position="124"/>
        <end position="146"/>
    </location>
</feature>
<feature type="compositionally biased region" description="Polar residues" evidence="1">
    <location>
        <begin position="147"/>
        <end position="156"/>
    </location>
</feature>